<name>GPMB_ECO24</name>
<organism>
    <name type="scientific">Escherichia coli O139:H28 (strain E24377A / ETEC)</name>
    <dbReference type="NCBI Taxonomy" id="331111"/>
    <lineage>
        <taxon>Bacteria</taxon>
        <taxon>Pseudomonadati</taxon>
        <taxon>Pseudomonadota</taxon>
        <taxon>Gammaproteobacteria</taxon>
        <taxon>Enterobacterales</taxon>
        <taxon>Enterobacteriaceae</taxon>
        <taxon>Escherichia</taxon>
    </lineage>
</organism>
<proteinExistence type="inferred from homology"/>
<sequence>MLQVYLVRHGETQWNAERRIQGQSDSPLTAKGEQQAMQVATRAKELGITHIISSDLGRTRRTAEIIAQACGCDIIFDSRLRELNMGVLEKRHIDSLTEEEENWRRQLVNGTVDGRIPEGESMQELSDRVNAALESCRDLPQGSRPLLVSHGIALGCLVSTILGLPAWAERRLRLRNCSISRVDYQESLWLASGWVVETAGDISHLDAPALDELQR</sequence>
<feature type="chain" id="PRO_1000064120" description="Probable phosphoglycerate mutase GpmB">
    <location>
        <begin position="1"/>
        <end position="215"/>
    </location>
</feature>
<feature type="active site" description="Tele-phosphohistidine intermediate" evidence="1">
    <location>
        <position position="9"/>
    </location>
</feature>
<feature type="active site" description="Proton donor/acceptor" evidence="1">
    <location>
        <position position="82"/>
    </location>
</feature>
<feature type="binding site" evidence="1">
    <location>
        <begin position="8"/>
        <end position="15"/>
    </location>
    <ligand>
        <name>substrate</name>
    </ligand>
</feature>
<feature type="binding site" evidence="1">
    <location>
        <begin position="21"/>
        <end position="22"/>
    </location>
    <ligand>
        <name>substrate</name>
    </ligand>
</feature>
<feature type="binding site" evidence="1">
    <location>
        <position position="58"/>
    </location>
    <ligand>
        <name>substrate</name>
    </ligand>
</feature>
<feature type="binding site" evidence="1">
    <location>
        <position position="60"/>
    </location>
    <ligand>
        <name>substrate</name>
    </ligand>
</feature>
<feature type="binding site" evidence="1">
    <location>
        <begin position="82"/>
        <end position="85"/>
    </location>
    <ligand>
        <name>substrate</name>
    </ligand>
</feature>
<feature type="binding site" evidence="1">
    <location>
        <begin position="104"/>
        <end position="105"/>
    </location>
    <ligand>
        <name>substrate</name>
    </ligand>
</feature>
<feature type="binding site" evidence="1">
    <location>
        <begin position="151"/>
        <end position="152"/>
    </location>
    <ligand>
        <name>substrate</name>
    </ligand>
</feature>
<feature type="site" description="Transition state stabilizer" evidence="1">
    <location>
        <position position="150"/>
    </location>
</feature>
<dbReference type="EC" id="5.4.2.-" evidence="1"/>
<dbReference type="EMBL" id="CP000800">
    <property type="protein sequence ID" value="ABV16563.1"/>
    <property type="molecule type" value="Genomic_DNA"/>
</dbReference>
<dbReference type="RefSeq" id="WP_000942344.1">
    <property type="nucleotide sequence ID" value="NC_009801.1"/>
</dbReference>
<dbReference type="SMR" id="A7ZVT7"/>
<dbReference type="GeneID" id="93777450"/>
<dbReference type="KEGG" id="ecw:EcE24377A_4995"/>
<dbReference type="HOGENOM" id="CLU_033323_9_5_6"/>
<dbReference type="UniPathway" id="UPA00109">
    <property type="reaction ID" value="UER00186"/>
</dbReference>
<dbReference type="Proteomes" id="UP000001122">
    <property type="component" value="Chromosome"/>
</dbReference>
<dbReference type="GO" id="GO:0005737">
    <property type="term" value="C:cytoplasm"/>
    <property type="evidence" value="ECO:0007669"/>
    <property type="project" value="TreeGrafter"/>
</dbReference>
<dbReference type="GO" id="GO:0016791">
    <property type="term" value="F:phosphatase activity"/>
    <property type="evidence" value="ECO:0007669"/>
    <property type="project" value="TreeGrafter"/>
</dbReference>
<dbReference type="GO" id="GO:0004619">
    <property type="term" value="F:phosphoglycerate mutase activity"/>
    <property type="evidence" value="ECO:0007669"/>
    <property type="project" value="UniProtKB-UniRule"/>
</dbReference>
<dbReference type="GO" id="GO:0006096">
    <property type="term" value="P:glycolytic process"/>
    <property type="evidence" value="ECO:0007669"/>
    <property type="project" value="UniProtKB-UniRule"/>
</dbReference>
<dbReference type="CDD" id="cd07067">
    <property type="entry name" value="HP_PGM_like"/>
    <property type="match status" value="1"/>
</dbReference>
<dbReference type="Gene3D" id="3.40.50.1240">
    <property type="entry name" value="Phosphoglycerate mutase-like"/>
    <property type="match status" value="1"/>
</dbReference>
<dbReference type="HAMAP" id="MF_01040">
    <property type="entry name" value="PGAM_GpmB"/>
    <property type="match status" value="1"/>
</dbReference>
<dbReference type="InterPro" id="IPR013078">
    <property type="entry name" value="His_Pase_superF_clade-1"/>
</dbReference>
<dbReference type="InterPro" id="IPR029033">
    <property type="entry name" value="His_PPase_superfam"/>
</dbReference>
<dbReference type="InterPro" id="IPR001345">
    <property type="entry name" value="PG/BPGM_mutase_AS"/>
</dbReference>
<dbReference type="InterPro" id="IPR050275">
    <property type="entry name" value="PGM_Phosphatase"/>
</dbReference>
<dbReference type="InterPro" id="IPR023086">
    <property type="entry name" value="Phosphoglycerate_mutase_GpmB"/>
</dbReference>
<dbReference type="NCBIfam" id="NF002901">
    <property type="entry name" value="PRK03482.1"/>
    <property type="match status" value="1"/>
</dbReference>
<dbReference type="PANTHER" id="PTHR48100">
    <property type="entry name" value="BROAD-SPECIFICITY PHOSPHATASE YOR283W-RELATED"/>
    <property type="match status" value="1"/>
</dbReference>
<dbReference type="PANTHER" id="PTHR48100:SF1">
    <property type="entry name" value="HISTIDINE PHOSPHATASE FAMILY PROTEIN-RELATED"/>
    <property type="match status" value="1"/>
</dbReference>
<dbReference type="Pfam" id="PF00300">
    <property type="entry name" value="His_Phos_1"/>
    <property type="match status" value="1"/>
</dbReference>
<dbReference type="SMART" id="SM00855">
    <property type="entry name" value="PGAM"/>
    <property type="match status" value="1"/>
</dbReference>
<dbReference type="SUPFAM" id="SSF53254">
    <property type="entry name" value="Phosphoglycerate mutase-like"/>
    <property type="match status" value="1"/>
</dbReference>
<dbReference type="PROSITE" id="PS00175">
    <property type="entry name" value="PG_MUTASE"/>
    <property type="match status" value="1"/>
</dbReference>
<keyword id="KW-0324">Glycolysis</keyword>
<keyword id="KW-0413">Isomerase</keyword>
<keyword id="KW-1185">Reference proteome</keyword>
<gene>
    <name evidence="1" type="primary">gpmB</name>
    <name type="ordered locus">EcE24377A_4995</name>
</gene>
<accession>A7ZVT7</accession>
<evidence type="ECO:0000255" key="1">
    <source>
        <dbReference type="HAMAP-Rule" id="MF_01040"/>
    </source>
</evidence>
<reference key="1">
    <citation type="journal article" date="2008" name="J. Bacteriol.">
        <title>The pangenome structure of Escherichia coli: comparative genomic analysis of E. coli commensal and pathogenic isolates.</title>
        <authorList>
            <person name="Rasko D.A."/>
            <person name="Rosovitz M.J."/>
            <person name="Myers G.S.A."/>
            <person name="Mongodin E.F."/>
            <person name="Fricke W.F."/>
            <person name="Gajer P."/>
            <person name="Crabtree J."/>
            <person name="Sebaihia M."/>
            <person name="Thomson N.R."/>
            <person name="Chaudhuri R."/>
            <person name="Henderson I.R."/>
            <person name="Sperandio V."/>
            <person name="Ravel J."/>
        </authorList>
    </citation>
    <scope>NUCLEOTIDE SEQUENCE [LARGE SCALE GENOMIC DNA]</scope>
    <source>
        <strain>E24377A / ETEC</strain>
    </source>
</reference>
<protein>
    <recommendedName>
        <fullName evidence="1">Probable phosphoglycerate mutase GpmB</fullName>
        <ecNumber evidence="1">5.4.2.-</ecNumber>
    </recommendedName>
    <alternativeName>
        <fullName evidence="1">PGAM</fullName>
    </alternativeName>
    <alternativeName>
        <fullName evidence="1">Phosphoglyceromutase</fullName>
    </alternativeName>
</protein>
<comment type="catalytic activity">
    <reaction evidence="1">
        <text>(2R)-2-phosphoglycerate = (2R)-3-phosphoglycerate</text>
        <dbReference type="Rhea" id="RHEA:15901"/>
        <dbReference type="ChEBI" id="CHEBI:58272"/>
        <dbReference type="ChEBI" id="CHEBI:58289"/>
    </reaction>
</comment>
<comment type="pathway">
    <text evidence="1">Carbohydrate degradation; glycolysis; pyruvate from D-glyceraldehyde 3-phosphate: step 3/5.</text>
</comment>
<comment type="similarity">
    <text evidence="1">Belongs to the phosphoglycerate mutase family. GpmB subfamily.</text>
</comment>